<feature type="signal peptide" evidence="2">
    <location>
        <begin position="1"/>
        <end position="18"/>
    </location>
</feature>
<feature type="chain" id="PRO_0000390760" description="Probable leucine aminopeptidase MCYG_03459">
    <location>
        <begin position="19"/>
        <end position="372"/>
    </location>
</feature>
<feature type="binding site" evidence="1">
    <location>
        <position position="175"/>
    </location>
    <ligand>
        <name>Zn(2+)</name>
        <dbReference type="ChEBI" id="CHEBI:29105"/>
        <label>1</label>
    </ligand>
</feature>
<feature type="binding site" evidence="1">
    <location>
        <position position="194"/>
    </location>
    <ligand>
        <name>Zn(2+)</name>
        <dbReference type="ChEBI" id="CHEBI:29105"/>
        <label>1</label>
    </ligand>
</feature>
<feature type="binding site" evidence="1">
    <location>
        <position position="194"/>
    </location>
    <ligand>
        <name>Zn(2+)</name>
        <dbReference type="ChEBI" id="CHEBI:29105"/>
        <label>2</label>
        <note>catalytic</note>
    </ligand>
</feature>
<feature type="binding site" evidence="1">
    <location>
        <position position="233"/>
    </location>
    <ligand>
        <name>Zn(2+)</name>
        <dbReference type="ChEBI" id="CHEBI:29105"/>
        <label>2</label>
        <note>catalytic</note>
    </ligand>
</feature>
<feature type="binding site" evidence="1">
    <location>
        <position position="260"/>
    </location>
    <ligand>
        <name>Zn(2+)</name>
        <dbReference type="ChEBI" id="CHEBI:29105"/>
        <label>1</label>
    </ligand>
</feature>
<feature type="binding site" evidence="1">
    <location>
        <position position="338"/>
    </location>
    <ligand>
        <name>Zn(2+)</name>
        <dbReference type="ChEBI" id="CHEBI:29105"/>
        <label>2</label>
        <note>catalytic</note>
    </ligand>
</feature>
<feature type="glycosylation site" description="N-linked (GlcNAc...) asparagine" evidence="2">
    <location>
        <position position="95"/>
    </location>
</feature>
<feature type="glycosylation site" description="N-linked (GlcNAc...) asparagine" evidence="2">
    <location>
        <position position="195"/>
    </location>
</feature>
<feature type="glycosylation site" description="N-linked (GlcNAc...) asparagine" evidence="2">
    <location>
        <position position="219"/>
    </location>
</feature>
<feature type="disulfide bond" evidence="1">
    <location>
        <begin position="305"/>
        <end position="309"/>
    </location>
</feature>
<dbReference type="EC" id="3.4.11.-"/>
<dbReference type="EMBL" id="DS995703">
    <property type="protein sequence ID" value="EEQ30640.1"/>
    <property type="molecule type" value="Genomic_DNA"/>
</dbReference>
<dbReference type="RefSeq" id="XP_002847953.1">
    <property type="nucleotide sequence ID" value="XM_002847907.1"/>
</dbReference>
<dbReference type="SMR" id="C5FLR8"/>
<dbReference type="STRING" id="554155.C5FLR8"/>
<dbReference type="MEROPS" id="M28.022"/>
<dbReference type="GeneID" id="9229275"/>
<dbReference type="VEuPathDB" id="FungiDB:MCYG_03459"/>
<dbReference type="eggNOG" id="KOG2195">
    <property type="taxonomic scope" value="Eukaryota"/>
</dbReference>
<dbReference type="HOGENOM" id="CLU_025866_0_0_1"/>
<dbReference type="OMA" id="FMGELAM"/>
<dbReference type="OrthoDB" id="2214at2759"/>
<dbReference type="Proteomes" id="UP000002035">
    <property type="component" value="Unassembled WGS sequence"/>
</dbReference>
<dbReference type="GO" id="GO:0005576">
    <property type="term" value="C:extracellular region"/>
    <property type="evidence" value="ECO:0007669"/>
    <property type="project" value="UniProtKB-SubCell"/>
</dbReference>
<dbReference type="GO" id="GO:0004177">
    <property type="term" value="F:aminopeptidase activity"/>
    <property type="evidence" value="ECO:0007669"/>
    <property type="project" value="UniProtKB-KW"/>
</dbReference>
<dbReference type="GO" id="GO:0046872">
    <property type="term" value="F:metal ion binding"/>
    <property type="evidence" value="ECO:0007669"/>
    <property type="project" value="UniProtKB-KW"/>
</dbReference>
<dbReference type="GO" id="GO:0008235">
    <property type="term" value="F:metalloexopeptidase activity"/>
    <property type="evidence" value="ECO:0007669"/>
    <property type="project" value="InterPro"/>
</dbReference>
<dbReference type="GO" id="GO:0006508">
    <property type="term" value="P:proteolysis"/>
    <property type="evidence" value="ECO:0007669"/>
    <property type="project" value="UniProtKB-KW"/>
</dbReference>
<dbReference type="CDD" id="cd03879">
    <property type="entry name" value="M28_AAP"/>
    <property type="match status" value="1"/>
</dbReference>
<dbReference type="FunFam" id="3.40.630.10:FF:000042">
    <property type="entry name" value="Peptide hydrolase"/>
    <property type="match status" value="1"/>
</dbReference>
<dbReference type="Gene3D" id="3.40.630.10">
    <property type="entry name" value="Zn peptidases"/>
    <property type="match status" value="1"/>
</dbReference>
<dbReference type="InterPro" id="IPR045175">
    <property type="entry name" value="M28_fam"/>
</dbReference>
<dbReference type="InterPro" id="IPR007484">
    <property type="entry name" value="Peptidase_M28"/>
</dbReference>
<dbReference type="PANTHER" id="PTHR12147:SF56">
    <property type="entry name" value="AMINOPEPTIDASE YDR415C-RELATED"/>
    <property type="match status" value="1"/>
</dbReference>
<dbReference type="PANTHER" id="PTHR12147">
    <property type="entry name" value="METALLOPEPTIDASE M28 FAMILY MEMBER"/>
    <property type="match status" value="1"/>
</dbReference>
<dbReference type="Pfam" id="PF04389">
    <property type="entry name" value="Peptidase_M28"/>
    <property type="match status" value="1"/>
</dbReference>
<dbReference type="SUPFAM" id="SSF53187">
    <property type="entry name" value="Zn-dependent exopeptidases"/>
    <property type="match status" value="1"/>
</dbReference>
<keyword id="KW-0031">Aminopeptidase</keyword>
<keyword id="KW-1015">Disulfide bond</keyword>
<keyword id="KW-0325">Glycoprotein</keyword>
<keyword id="KW-0378">Hydrolase</keyword>
<keyword id="KW-0479">Metal-binding</keyword>
<keyword id="KW-0645">Protease</keyword>
<keyword id="KW-1185">Reference proteome</keyword>
<keyword id="KW-0964">Secreted</keyword>
<keyword id="KW-0732">Signal</keyword>
<keyword id="KW-0843">Virulence</keyword>
<keyword id="KW-0862">Zinc</keyword>
<accession>C5FLR8</accession>
<gene>
    <name type="ORF">MCYG_03459</name>
</gene>
<reference key="1">
    <citation type="journal article" date="2012" name="MBio">
        <title>Comparative genome analysis of Trichophyton rubrum and related dermatophytes reveals candidate genes involved in infection.</title>
        <authorList>
            <person name="Martinez D.A."/>
            <person name="Oliver B.G."/>
            <person name="Graeser Y."/>
            <person name="Goldberg J.M."/>
            <person name="Li W."/>
            <person name="Martinez-Rossi N.M."/>
            <person name="Monod M."/>
            <person name="Shelest E."/>
            <person name="Barton R.C."/>
            <person name="Birch E."/>
            <person name="Brakhage A.A."/>
            <person name="Chen Z."/>
            <person name="Gurr S.J."/>
            <person name="Heiman D."/>
            <person name="Heitman J."/>
            <person name="Kosti I."/>
            <person name="Rossi A."/>
            <person name="Saif S."/>
            <person name="Samalova M."/>
            <person name="Saunders C.W."/>
            <person name="Shea T."/>
            <person name="Summerbell R.C."/>
            <person name="Xu J."/>
            <person name="Young S."/>
            <person name="Zeng Q."/>
            <person name="Birren B.W."/>
            <person name="Cuomo C.A."/>
            <person name="White T.C."/>
        </authorList>
    </citation>
    <scope>NUCLEOTIDE SEQUENCE [LARGE SCALE GENOMIC DNA]</scope>
    <source>
        <strain>ATCC MYA-4605 / CBS 113480</strain>
    </source>
</reference>
<name>LAP4_ARTOC</name>
<proteinExistence type="inferred from homology"/>
<organism>
    <name type="scientific">Arthroderma otae (strain ATCC MYA-4605 / CBS 113480)</name>
    <name type="common">Microsporum canis</name>
    <dbReference type="NCBI Taxonomy" id="554155"/>
    <lineage>
        <taxon>Eukaryota</taxon>
        <taxon>Fungi</taxon>
        <taxon>Dikarya</taxon>
        <taxon>Ascomycota</taxon>
        <taxon>Pezizomycotina</taxon>
        <taxon>Eurotiomycetes</taxon>
        <taxon>Eurotiomycetidae</taxon>
        <taxon>Onygenales</taxon>
        <taxon>Arthrodermataceae</taxon>
        <taxon>Microsporum</taxon>
    </lineage>
</organism>
<protein>
    <recommendedName>
        <fullName>Probable leucine aminopeptidase MCYG_03459</fullName>
        <ecNumber>3.4.11.-</ecNumber>
    </recommendedName>
    <alternativeName>
        <fullName>Leucyl aminopeptidase MCYG_03459</fullName>
    </alternativeName>
</protein>
<comment type="function">
    <text evidence="1">Probable extracellular aminopeptidase which contributes to pathogenicity.</text>
</comment>
<comment type="cofactor">
    <cofactor evidence="1">
        <name>Zn(2+)</name>
        <dbReference type="ChEBI" id="CHEBI:29105"/>
    </cofactor>
    <text evidence="1">Binds 2 Zn(2+) ions per subunit.</text>
</comment>
<comment type="subunit">
    <text evidence="1">Monomer.</text>
</comment>
<comment type="subcellular location">
    <subcellularLocation>
        <location evidence="1">Secreted</location>
    </subcellularLocation>
</comment>
<comment type="similarity">
    <text evidence="3">Belongs to the peptidase M28 family. M28E subfamily.</text>
</comment>
<sequence length="372" mass="40506">MKISTLAVVSAFAVTAIAGPVRPDGIGSDKYLIELGPGETQWVTKDQKHHMRAAGKTFIDITDEFGSGFTTTEVVPANYPKSARHASLIKPLIANLSKENLMRDLTTLTKFNNRYYESDTGVESATWILQQVQKIIKDSGVKGAKVEKFTNQFKQFNIIATIPGSSKSTVIVGAHQDSINSKSPMKGRAPGADDNGSGTVVILEAFRNILKSKAIQAANATNTLEFHWYAGEEGGLLGSNNIFKKYKADGRQVKAMLNQDLTGFTNNGKPEQLGLIADNTNQQLNEFCKMIVKQYASIPIVEAKCGYACSDHASAHRNGFPASFVAETSYRNTNPYLHTDGDVIANLNFNHMLEHAKVVLGFMGELAMAPNL</sequence>
<evidence type="ECO:0000250" key="1"/>
<evidence type="ECO:0000255" key="2"/>
<evidence type="ECO:0000305" key="3"/>